<gene>
    <name type="primary">Olr1500</name>
</gene>
<comment type="function">
    <text evidence="3">Odorant receptor.</text>
</comment>
<comment type="subcellular location">
    <subcellularLocation>
        <location>Cell membrane</location>
        <topology>Multi-pass membrane protein</topology>
    </subcellularLocation>
</comment>
<comment type="tissue specificity">
    <text>Olfactory epithelium.</text>
</comment>
<comment type="similarity">
    <text evidence="2">Belongs to the G-protein coupled receptor 1 family.</text>
</comment>
<proteinExistence type="evidence at transcript level"/>
<feature type="chain" id="PRO_0000150876" description="Olfactory receptor 1500">
    <location>
        <begin position="1"/>
        <end position="312"/>
    </location>
</feature>
<feature type="topological domain" description="Extracellular" evidence="1">
    <location>
        <begin position="1"/>
        <end position="25"/>
    </location>
</feature>
<feature type="transmembrane region" description="Helical; Name=1" evidence="1">
    <location>
        <begin position="26"/>
        <end position="49"/>
    </location>
</feature>
<feature type="topological domain" description="Cytoplasmic" evidence="1">
    <location>
        <begin position="50"/>
        <end position="57"/>
    </location>
</feature>
<feature type="transmembrane region" description="Helical; Name=2" evidence="1">
    <location>
        <begin position="58"/>
        <end position="79"/>
    </location>
</feature>
<feature type="topological domain" description="Extracellular" evidence="1">
    <location>
        <begin position="80"/>
        <end position="100"/>
    </location>
</feature>
<feature type="transmembrane region" description="Helical; Name=3" evidence="1">
    <location>
        <begin position="101"/>
        <end position="120"/>
    </location>
</feature>
<feature type="topological domain" description="Cytoplasmic" evidence="1">
    <location>
        <begin position="121"/>
        <end position="139"/>
    </location>
</feature>
<feature type="transmembrane region" description="Helical; Name=4" evidence="1">
    <location>
        <begin position="140"/>
        <end position="158"/>
    </location>
</feature>
<feature type="topological domain" description="Extracellular" evidence="1">
    <location>
        <begin position="159"/>
        <end position="196"/>
    </location>
</feature>
<feature type="transmembrane region" description="Helical; Name=5" evidence="1">
    <location>
        <begin position="197"/>
        <end position="219"/>
    </location>
</feature>
<feature type="topological domain" description="Cytoplasmic" evidence="1">
    <location>
        <begin position="220"/>
        <end position="236"/>
    </location>
</feature>
<feature type="transmembrane region" description="Helical; Name=6" evidence="1">
    <location>
        <begin position="237"/>
        <end position="260"/>
    </location>
</feature>
<feature type="topological domain" description="Extracellular" evidence="1">
    <location>
        <begin position="261"/>
        <end position="272"/>
    </location>
</feature>
<feature type="transmembrane region" description="Helical; Name=7" evidence="1">
    <location>
        <begin position="273"/>
        <end position="292"/>
    </location>
</feature>
<feature type="topological domain" description="Cytoplasmic" evidence="1">
    <location>
        <begin position="293"/>
        <end position="312"/>
    </location>
</feature>
<feature type="glycosylation site" description="N-linked (GlcNAc...) asparagine" evidence="1">
    <location>
        <position position="5"/>
    </location>
</feature>
<feature type="disulfide bond" evidence="2">
    <location>
        <begin position="97"/>
        <end position="189"/>
    </location>
</feature>
<reference key="1">
    <citation type="journal article" date="1991" name="Cell">
        <title>A novel multigene family may encode odorant receptors: a molecular basis for odor recognition.</title>
        <authorList>
            <person name="Buck L."/>
            <person name="Axel R."/>
        </authorList>
    </citation>
    <scope>NUCLEOTIDE SEQUENCE [MRNA]</scope>
</reference>
<dbReference type="EMBL" id="M64391">
    <property type="protein sequence ID" value="AAA41754.1"/>
    <property type="molecule type" value="mRNA"/>
</dbReference>
<dbReference type="PIR" id="I23701">
    <property type="entry name" value="I23701"/>
</dbReference>
<dbReference type="SMR" id="P23273"/>
<dbReference type="STRING" id="10116.ENSRNOP00000047074"/>
<dbReference type="GlyCosmos" id="P23273">
    <property type="glycosylation" value="1 site, No reported glycans"/>
</dbReference>
<dbReference type="GlyGen" id="P23273">
    <property type="glycosylation" value="1 site"/>
</dbReference>
<dbReference type="PaxDb" id="10116-ENSRNOP00000047074"/>
<dbReference type="AGR" id="RGD:1333178"/>
<dbReference type="AGR" id="RGD:1334013"/>
<dbReference type="RGD" id="1334013">
    <property type="gene designation" value="Olr1500"/>
</dbReference>
<dbReference type="eggNOG" id="ENOG502SI5J">
    <property type="taxonomic scope" value="Eukaryota"/>
</dbReference>
<dbReference type="InParanoid" id="P23273"/>
<dbReference type="PhylomeDB" id="P23273"/>
<dbReference type="PRO" id="PR:P23273"/>
<dbReference type="Proteomes" id="UP000002494">
    <property type="component" value="Unplaced"/>
</dbReference>
<dbReference type="GO" id="GO:0005886">
    <property type="term" value="C:plasma membrane"/>
    <property type="evidence" value="ECO:0000318"/>
    <property type="project" value="GO_Central"/>
</dbReference>
<dbReference type="GO" id="GO:0004930">
    <property type="term" value="F:G protein-coupled receptor activity"/>
    <property type="evidence" value="ECO:0007669"/>
    <property type="project" value="UniProtKB-KW"/>
</dbReference>
<dbReference type="GO" id="GO:0004984">
    <property type="term" value="F:olfactory receptor activity"/>
    <property type="evidence" value="ECO:0000318"/>
    <property type="project" value="GO_Central"/>
</dbReference>
<dbReference type="GO" id="GO:0007165">
    <property type="term" value="P:signal transduction"/>
    <property type="evidence" value="ECO:0000318"/>
    <property type="project" value="GO_Central"/>
</dbReference>
<dbReference type="FunFam" id="1.20.1070.10:FF:000009">
    <property type="entry name" value="Olfactory receptor"/>
    <property type="match status" value="1"/>
</dbReference>
<dbReference type="Gene3D" id="1.20.1070.10">
    <property type="entry name" value="Rhodopsin 7-helix transmembrane proteins"/>
    <property type="match status" value="1"/>
</dbReference>
<dbReference type="InterPro" id="IPR000276">
    <property type="entry name" value="GPCR_Rhodpsn"/>
</dbReference>
<dbReference type="InterPro" id="IPR017452">
    <property type="entry name" value="GPCR_Rhodpsn_7TM"/>
</dbReference>
<dbReference type="InterPro" id="IPR000725">
    <property type="entry name" value="Olfact_rcpt"/>
</dbReference>
<dbReference type="PANTHER" id="PTHR48001">
    <property type="entry name" value="OLFACTORY RECEPTOR"/>
    <property type="match status" value="1"/>
</dbReference>
<dbReference type="Pfam" id="PF13853">
    <property type="entry name" value="7tm_4"/>
    <property type="match status" value="1"/>
</dbReference>
<dbReference type="PRINTS" id="PR00237">
    <property type="entry name" value="GPCRRHODOPSN"/>
</dbReference>
<dbReference type="PRINTS" id="PR00245">
    <property type="entry name" value="OLFACTORYR"/>
</dbReference>
<dbReference type="SUPFAM" id="SSF81321">
    <property type="entry name" value="Family A G protein-coupled receptor-like"/>
    <property type="match status" value="1"/>
</dbReference>
<dbReference type="PROSITE" id="PS00237">
    <property type="entry name" value="G_PROTEIN_RECEP_F1_1"/>
    <property type="match status" value="1"/>
</dbReference>
<dbReference type="PROSITE" id="PS50262">
    <property type="entry name" value="G_PROTEIN_RECEP_F1_2"/>
    <property type="match status" value="1"/>
</dbReference>
<evidence type="ECO:0000255" key="1"/>
<evidence type="ECO:0000255" key="2">
    <source>
        <dbReference type="PROSITE-ProRule" id="PRU00521"/>
    </source>
</evidence>
<evidence type="ECO:0000305" key="3"/>
<sequence length="312" mass="35718">MTGNNQTLILEFLLLGLPIPSEYHLLFYALFLAMYLTIILGNLLIIVLVRLDSHLHMPMYLFLSNLSFSDLCFSSVTMPKLLQNMQSQVPSISYTGCLTQLYFFMVFGDMESFLLVVMAYDRYVAICFPLRYTTIMSTKFCASLVLLLWMLTMTHALLHTLLIARLSFCEKNVILHFFCDISALLKLSCSDIYVNELMIYILGGLIIIIPFLLIVMSYVRIFFSILKFPSIQDIYKVFSTCGSHLSVVTLFYGTIFGIYLCPSGNNSTVKEIAMAMMYTVVTPMLNPFIYSLRNRDMKRALIRVICTKKISL</sequence>
<organism>
    <name type="scientific">Rattus norvegicus</name>
    <name type="common">Rat</name>
    <dbReference type="NCBI Taxonomy" id="10116"/>
    <lineage>
        <taxon>Eukaryota</taxon>
        <taxon>Metazoa</taxon>
        <taxon>Chordata</taxon>
        <taxon>Craniata</taxon>
        <taxon>Vertebrata</taxon>
        <taxon>Euteleostomi</taxon>
        <taxon>Mammalia</taxon>
        <taxon>Eutheria</taxon>
        <taxon>Euarchontoglires</taxon>
        <taxon>Glires</taxon>
        <taxon>Rodentia</taxon>
        <taxon>Myomorpha</taxon>
        <taxon>Muroidea</taxon>
        <taxon>Muridae</taxon>
        <taxon>Murinae</taxon>
        <taxon>Rattus</taxon>
    </lineage>
</organism>
<protein>
    <recommendedName>
        <fullName>Olfactory receptor 1500</fullName>
    </recommendedName>
    <alternativeName>
        <fullName>Olfactory receptor-like protein I14</fullName>
    </alternativeName>
</protein>
<name>O1500_RAT</name>
<accession>P23273</accession>
<keyword id="KW-1003">Cell membrane</keyword>
<keyword id="KW-1015">Disulfide bond</keyword>
<keyword id="KW-0297">G-protein coupled receptor</keyword>
<keyword id="KW-0325">Glycoprotein</keyword>
<keyword id="KW-0472">Membrane</keyword>
<keyword id="KW-0552">Olfaction</keyword>
<keyword id="KW-0675">Receptor</keyword>
<keyword id="KW-1185">Reference proteome</keyword>
<keyword id="KW-0716">Sensory transduction</keyword>
<keyword id="KW-0807">Transducer</keyword>
<keyword id="KW-0812">Transmembrane</keyword>
<keyword id="KW-1133">Transmembrane helix</keyword>